<sequence length="275" mass="30070">MSMDGLPPLRDVIERHGLFARKALGQNFLLDLNLTRRIARTAGGLDNATVLEVGPGPGGLTRALLMEGARRVVAIERDERCIAALEEIAAHYPGRLEIVAGDAMKADFAALAGNSGDVKIVANLPYNIGTELLIRWLTPQTWPPFYESMTLMFQREVAERIVAKPGSSHYGRLGVLAGWRTEARIAFDVPPQAFTPPPKVISSVVKIVPRADPLTVEVGRLARTTEAAFGQRRKMLRQSLRSVGGEALLEKAGIDGTRRAETLSVEEFVRLAREI</sequence>
<organism>
    <name type="scientific">Chelativorans sp. (strain BNC1)</name>
    <dbReference type="NCBI Taxonomy" id="266779"/>
    <lineage>
        <taxon>Bacteria</taxon>
        <taxon>Pseudomonadati</taxon>
        <taxon>Pseudomonadota</taxon>
        <taxon>Alphaproteobacteria</taxon>
        <taxon>Hyphomicrobiales</taxon>
        <taxon>Phyllobacteriaceae</taxon>
        <taxon>Chelativorans</taxon>
    </lineage>
</organism>
<proteinExistence type="inferred from homology"/>
<evidence type="ECO:0000255" key="1">
    <source>
        <dbReference type="HAMAP-Rule" id="MF_00607"/>
    </source>
</evidence>
<dbReference type="EC" id="2.1.1.182" evidence="1"/>
<dbReference type="EMBL" id="CP000390">
    <property type="protein sequence ID" value="ABG63156.1"/>
    <property type="molecule type" value="Genomic_DNA"/>
</dbReference>
<dbReference type="SMR" id="Q11HG9"/>
<dbReference type="STRING" id="266779.Meso_1762"/>
<dbReference type="KEGG" id="mes:Meso_1762"/>
<dbReference type="eggNOG" id="COG0030">
    <property type="taxonomic scope" value="Bacteria"/>
</dbReference>
<dbReference type="HOGENOM" id="CLU_041220_0_1_5"/>
<dbReference type="OrthoDB" id="9814755at2"/>
<dbReference type="GO" id="GO:0005829">
    <property type="term" value="C:cytosol"/>
    <property type="evidence" value="ECO:0007669"/>
    <property type="project" value="TreeGrafter"/>
</dbReference>
<dbReference type="GO" id="GO:0052908">
    <property type="term" value="F:16S rRNA (adenine(1518)-N(6)/adenine(1519)-N(6))-dimethyltransferase activity"/>
    <property type="evidence" value="ECO:0007669"/>
    <property type="project" value="UniProtKB-EC"/>
</dbReference>
<dbReference type="GO" id="GO:0003723">
    <property type="term" value="F:RNA binding"/>
    <property type="evidence" value="ECO:0007669"/>
    <property type="project" value="UniProtKB-KW"/>
</dbReference>
<dbReference type="CDD" id="cd02440">
    <property type="entry name" value="AdoMet_MTases"/>
    <property type="match status" value="1"/>
</dbReference>
<dbReference type="FunFam" id="1.10.8.100:FF:000001">
    <property type="entry name" value="Ribosomal RNA small subunit methyltransferase A"/>
    <property type="match status" value="1"/>
</dbReference>
<dbReference type="Gene3D" id="1.10.8.100">
    <property type="entry name" value="Ribosomal RNA adenine dimethylase-like, domain 2"/>
    <property type="match status" value="1"/>
</dbReference>
<dbReference type="Gene3D" id="3.40.50.150">
    <property type="entry name" value="Vaccinia Virus protein VP39"/>
    <property type="match status" value="1"/>
</dbReference>
<dbReference type="HAMAP" id="MF_00607">
    <property type="entry name" value="16SrRNA_methyltr_A"/>
    <property type="match status" value="1"/>
</dbReference>
<dbReference type="InterPro" id="IPR001737">
    <property type="entry name" value="KsgA/Erm"/>
</dbReference>
<dbReference type="InterPro" id="IPR023165">
    <property type="entry name" value="rRNA_Ade_diMease-like_C"/>
</dbReference>
<dbReference type="InterPro" id="IPR020596">
    <property type="entry name" value="rRNA_Ade_Mease_Trfase_CS"/>
</dbReference>
<dbReference type="InterPro" id="IPR020598">
    <property type="entry name" value="rRNA_Ade_methylase_Trfase_N"/>
</dbReference>
<dbReference type="InterPro" id="IPR011530">
    <property type="entry name" value="rRNA_adenine_dimethylase"/>
</dbReference>
<dbReference type="InterPro" id="IPR029063">
    <property type="entry name" value="SAM-dependent_MTases_sf"/>
</dbReference>
<dbReference type="NCBIfam" id="TIGR00755">
    <property type="entry name" value="ksgA"/>
    <property type="match status" value="1"/>
</dbReference>
<dbReference type="PANTHER" id="PTHR11727">
    <property type="entry name" value="DIMETHYLADENOSINE TRANSFERASE"/>
    <property type="match status" value="1"/>
</dbReference>
<dbReference type="PANTHER" id="PTHR11727:SF7">
    <property type="entry name" value="DIMETHYLADENOSINE TRANSFERASE-RELATED"/>
    <property type="match status" value="1"/>
</dbReference>
<dbReference type="Pfam" id="PF00398">
    <property type="entry name" value="RrnaAD"/>
    <property type="match status" value="1"/>
</dbReference>
<dbReference type="SMART" id="SM00650">
    <property type="entry name" value="rADc"/>
    <property type="match status" value="1"/>
</dbReference>
<dbReference type="SUPFAM" id="SSF53335">
    <property type="entry name" value="S-adenosyl-L-methionine-dependent methyltransferases"/>
    <property type="match status" value="1"/>
</dbReference>
<dbReference type="PROSITE" id="PS01131">
    <property type="entry name" value="RRNA_A_DIMETH"/>
    <property type="match status" value="1"/>
</dbReference>
<dbReference type="PROSITE" id="PS51689">
    <property type="entry name" value="SAM_RNA_A_N6_MT"/>
    <property type="match status" value="1"/>
</dbReference>
<accession>Q11HG9</accession>
<feature type="chain" id="PRO_0000257302" description="Ribosomal RNA small subunit methyltransferase A">
    <location>
        <begin position="1"/>
        <end position="275"/>
    </location>
</feature>
<feature type="binding site" evidence="1">
    <location>
        <position position="27"/>
    </location>
    <ligand>
        <name>S-adenosyl-L-methionine</name>
        <dbReference type="ChEBI" id="CHEBI:59789"/>
    </ligand>
</feature>
<feature type="binding site" evidence="1">
    <location>
        <position position="29"/>
    </location>
    <ligand>
        <name>S-adenosyl-L-methionine</name>
        <dbReference type="ChEBI" id="CHEBI:59789"/>
    </ligand>
</feature>
<feature type="binding site" evidence="1">
    <location>
        <position position="54"/>
    </location>
    <ligand>
        <name>S-adenosyl-L-methionine</name>
        <dbReference type="ChEBI" id="CHEBI:59789"/>
    </ligand>
</feature>
<feature type="binding site" evidence="1">
    <location>
        <position position="76"/>
    </location>
    <ligand>
        <name>S-adenosyl-L-methionine</name>
        <dbReference type="ChEBI" id="CHEBI:59789"/>
    </ligand>
</feature>
<feature type="binding site" evidence="1">
    <location>
        <position position="102"/>
    </location>
    <ligand>
        <name>S-adenosyl-L-methionine</name>
        <dbReference type="ChEBI" id="CHEBI:59789"/>
    </ligand>
</feature>
<feature type="binding site" evidence="1">
    <location>
        <position position="123"/>
    </location>
    <ligand>
        <name>S-adenosyl-L-methionine</name>
        <dbReference type="ChEBI" id="CHEBI:59789"/>
    </ligand>
</feature>
<protein>
    <recommendedName>
        <fullName evidence="1">Ribosomal RNA small subunit methyltransferase A</fullName>
        <ecNumber evidence="1">2.1.1.182</ecNumber>
    </recommendedName>
    <alternativeName>
        <fullName evidence="1">16S rRNA (adenine(1518)-N(6)/adenine(1519)-N(6))-dimethyltransferase</fullName>
    </alternativeName>
    <alternativeName>
        <fullName evidence="1">16S rRNA dimethyladenosine transferase</fullName>
    </alternativeName>
    <alternativeName>
        <fullName evidence="1">16S rRNA dimethylase</fullName>
    </alternativeName>
    <alternativeName>
        <fullName evidence="1">S-adenosylmethionine-6-N', N'-adenosyl(rRNA) dimethyltransferase</fullName>
    </alternativeName>
</protein>
<name>RSMA_CHESB</name>
<reference key="1">
    <citation type="submission" date="2006-06" db="EMBL/GenBank/DDBJ databases">
        <title>Complete sequence of chromosome of Mesorhizobium sp. BNC1.</title>
        <authorList>
            <consortium name="US DOE Joint Genome Institute"/>
            <person name="Copeland A."/>
            <person name="Lucas S."/>
            <person name="Lapidus A."/>
            <person name="Barry K."/>
            <person name="Detter J.C."/>
            <person name="Glavina del Rio T."/>
            <person name="Hammon N."/>
            <person name="Israni S."/>
            <person name="Dalin E."/>
            <person name="Tice H."/>
            <person name="Pitluck S."/>
            <person name="Chertkov O."/>
            <person name="Brettin T."/>
            <person name="Bruce D."/>
            <person name="Han C."/>
            <person name="Tapia R."/>
            <person name="Gilna P."/>
            <person name="Schmutz J."/>
            <person name="Larimer F."/>
            <person name="Land M."/>
            <person name="Hauser L."/>
            <person name="Kyrpides N."/>
            <person name="Mikhailova N."/>
            <person name="Richardson P."/>
        </authorList>
    </citation>
    <scope>NUCLEOTIDE SEQUENCE [LARGE SCALE GENOMIC DNA]</scope>
    <source>
        <strain>BNC1</strain>
    </source>
</reference>
<keyword id="KW-0963">Cytoplasm</keyword>
<keyword id="KW-0489">Methyltransferase</keyword>
<keyword id="KW-0694">RNA-binding</keyword>
<keyword id="KW-0698">rRNA processing</keyword>
<keyword id="KW-0949">S-adenosyl-L-methionine</keyword>
<keyword id="KW-0808">Transferase</keyword>
<gene>
    <name evidence="1" type="primary">rsmA</name>
    <name evidence="1" type="synonym">ksgA</name>
    <name type="ordered locus">Meso_1762</name>
</gene>
<comment type="function">
    <text evidence="1">Specifically dimethylates two adjacent adenosines (A1518 and A1519) in the loop of a conserved hairpin near the 3'-end of 16S rRNA in the 30S particle. May play a critical role in biogenesis of 30S subunits.</text>
</comment>
<comment type="catalytic activity">
    <reaction evidence="1">
        <text>adenosine(1518)/adenosine(1519) in 16S rRNA + 4 S-adenosyl-L-methionine = N(6)-dimethyladenosine(1518)/N(6)-dimethyladenosine(1519) in 16S rRNA + 4 S-adenosyl-L-homocysteine + 4 H(+)</text>
        <dbReference type="Rhea" id="RHEA:19609"/>
        <dbReference type="Rhea" id="RHEA-COMP:10232"/>
        <dbReference type="Rhea" id="RHEA-COMP:10233"/>
        <dbReference type="ChEBI" id="CHEBI:15378"/>
        <dbReference type="ChEBI" id="CHEBI:57856"/>
        <dbReference type="ChEBI" id="CHEBI:59789"/>
        <dbReference type="ChEBI" id="CHEBI:74411"/>
        <dbReference type="ChEBI" id="CHEBI:74493"/>
        <dbReference type="EC" id="2.1.1.182"/>
    </reaction>
</comment>
<comment type="subcellular location">
    <subcellularLocation>
        <location evidence="1">Cytoplasm</location>
    </subcellularLocation>
</comment>
<comment type="similarity">
    <text evidence="1">Belongs to the class I-like SAM-binding methyltransferase superfamily. rRNA adenine N(6)-methyltransferase family. RsmA subfamily.</text>
</comment>